<name>RS10_BURCJ</name>
<accession>B4E5B9</accession>
<keyword id="KW-0687">Ribonucleoprotein</keyword>
<keyword id="KW-0689">Ribosomal protein</keyword>
<feature type="chain" id="PRO_1000127091" description="Small ribosomal subunit protein uS10">
    <location>
        <begin position="1"/>
        <end position="103"/>
    </location>
</feature>
<gene>
    <name evidence="1" type="primary">rpsJ</name>
    <name type="ordered locus">BceJ2315_02360</name>
    <name type="ORF">BCAL0233</name>
</gene>
<comment type="function">
    <text evidence="1">Involved in the binding of tRNA to the ribosomes.</text>
</comment>
<comment type="subunit">
    <text evidence="1">Part of the 30S ribosomal subunit.</text>
</comment>
<comment type="similarity">
    <text evidence="1">Belongs to the universal ribosomal protein uS10 family.</text>
</comment>
<reference key="1">
    <citation type="journal article" date="2009" name="J. Bacteriol.">
        <title>The genome of Burkholderia cenocepacia J2315, an epidemic pathogen of cystic fibrosis patients.</title>
        <authorList>
            <person name="Holden M.T."/>
            <person name="Seth-Smith H.M."/>
            <person name="Crossman L.C."/>
            <person name="Sebaihia M."/>
            <person name="Bentley S.D."/>
            <person name="Cerdeno-Tarraga A.M."/>
            <person name="Thomson N.R."/>
            <person name="Bason N."/>
            <person name="Quail M.A."/>
            <person name="Sharp S."/>
            <person name="Cherevach I."/>
            <person name="Churcher C."/>
            <person name="Goodhead I."/>
            <person name="Hauser H."/>
            <person name="Holroyd N."/>
            <person name="Mungall K."/>
            <person name="Scott P."/>
            <person name="Walker D."/>
            <person name="White B."/>
            <person name="Rose H."/>
            <person name="Iversen P."/>
            <person name="Mil-Homens D."/>
            <person name="Rocha E.P."/>
            <person name="Fialho A.M."/>
            <person name="Baldwin A."/>
            <person name="Dowson C."/>
            <person name="Barrell B.G."/>
            <person name="Govan J.R."/>
            <person name="Vandamme P."/>
            <person name="Hart C.A."/>
            <person name="Mahenthiralingam E."/>
            <person name="Parkhill J."/>
        </authorList>
    </citation>
    <scope>NUCLEOTIDE SEQUENCE [LARGE SCALE GENOMIC DNA]</scope>
    <source>
        <strain>ATCC BAA-245 / DSM 16553 / LMG 16656 / NCTC 13227 / J2315 / CF5610</strain>
    </source>
</reference>
<proteinExistence type="inferred from homology"/>
<sequence>MQQQKIRIRLKAFDYRLIDQSAAEIVDTAKRTGAIVRGPVPLPTRIQRFDILRSPHVNKTSRDQLEIRTHQRLMDIVDPTDKTVDALMKLDLPAGVDVEIKLQ</sequence>
<dbReference type="EMBL" id="AM747720">
    <property type="protein sequence ID" value="CAR50544.1"/>
    <property type="molecule type" value="Genomic_DNA"/>
</dbReference>
<dbReference type="RefSeq" id="WP_004199280.1">
    <property type="nucleotide sequence ID" value="NC_011000.1"/>
</dbReference>
<dbReference type="SMR" id="B4E5B9"/>
<dbReference type="GeneID" id="98107161"/>
<dbReference type="KEGG" id="bcj:BCAL0233"/>
<dbReference type="eggNOG" id="COG0051">
    <property type="taxonomic scope" value="Bacteria"/>
</dbReference>
<dbReference type="HOGENOM" id="CLU_122625_1_3_4"/>
<dbReference type="BioCyc" id="BCEN216591:G1G1V-276-MONOMER"/>
<dbReference type="Proteomes" id="UP000001035">
    <property type="component" value="Chromosome 1"/>
</dbReference>
<dbReference type="GO" id="GO:1990904">
    <property type="term" value="C:ribonucleoprotein complex"/>
    <property type="evidence" value="ECO:0007669"/>
    <property type="project" value="UniProtKB-KW"/>
</dbReference>
<dbReference type="GO" id="GO:0005840">
    <property type="term" value="C:ribosome"/>
    <property type="evidence" value="ECO:0007669"/>
    <property type="project" value="UniProtKB-KW"/>
</dbReference>
<dbReference type="GO" id="GO:0003735">
    <property type="term" value="F:structural constituent of ribosome"/>
    <property type="evidence" value="ECO:0007669"/>
    <property type="project" value="InterPro"/>
</dbReference>
<dbReference type="GO" id="GO:0000049">
    <property type="term" value="F:tRNA binding"/>
    <property type="evidence" value="ECO:0007669"/>
    <property type="project" value="UniProtKB-UniRule"/>
</dbReference>
<dbReference type="GO" id="GO:0006412">
    <property type="term" value="P:translation"/>
    <property type="evidence" value="ECO:0007669"/>
    <property type="project" value="UniProtKB-UniRule"/>
</dbReference>
<dbReference type="FunFam" id="3.30.70.600:FF:000001">
    <property type="entry name" value="30S ribosomal protein S10"/>
    <property type="match status" value="1"/>
</dbReference>
<dbReference type="Gene3D" id="3.30.70.600">
    <property type="entry name" value="Ribosomal protein S10 domain"/>
    <property type="match status" value="1"/>
</dbReference>
<dbReference type="HAMAP" id="MF_00508">
    <property type="entry name" value="Ribosomal_uS10"/>
    <property type="match status" value="1"/>
</dbReference>
<dbReference type="InterPro" id="IPR001848">
    <property type="entry name" value="Ribosomal_uS10"/>
</dbReference>
<dbReference type="InterPro" id="IPR018268">
    <property type="entry name" value="Ribosomal_uS10_CS"/>
</dbReference>
<dbReference type="InterPro" id="IPR027486">
    <property type="entry name" value="Ribosomal_uS10_dom"/>
</dbReference>
<dbReference type="InterPro" id="IPR036838">
    <property type="entry name" value="Ribosomal_uS10_dom_sf"/>
</dbReference>
<dbReference type="NCBIfam" id="NF001861">
    <property type="entry name" value="PRK00596.1"/>
    <property type="match status" value="1"/>
</dbReference>
<dbReference type="NCBIfam" id="TIGR01049">
    <property type="entry name" value="rpsJ_bact"/>
    <property type="match status" value="1"/>
</dbReference>
<dbReference type="PANTHER" id="PTHR11700">
    <property type="entry name" value="30S RIBOSOMAL PROTEIN S10 FAMILY MEMBER"/>
    <property type="match status" value="1"/>
</dbReference>
<dbReference type="Pfam" id="PF00338">
    <property type="entry name" value="Ribosomal_S10"/>
    <property type="match status" value="1"/>
</dbReference>
<dbReference type="PRINTS" id="PR00971">
    <property type="entry name" value="RIBOSOMALS10"/>
</dbReference>
<dbReference type="SMART" id="SM01403">
    <property type="entry name" value="Ribosomal_S10"/>
    <property type="match status" value="1"/>
</dbReference>
<dbReference type="SUPFAM" id="SSF54999">
    <property type="entry name" value="Ribosomal protein S10"/>
    <property type="match status" value="1"/>
</dbReference>
<dbReference type="PROSITE" id="PS00361">
    <property type="entry name" value="RIBOSOMAL_S10"/>
    <property type="match status" value="1"/>
</dbReference>
<protein>
    <recommendedName>
        <fullName evidence="1">Small ribosomal subunit protein uS10</fullName>
    </recommendedName>
    <alternativeName>
        <fullName evidence="2">30S ribosomal protein S10</fullName>
    </alternativeName>
</protein>
<organism>
    <name type="scientific">Burkholderia cenocepacia (strain ATCC BAA-245 / DSM 16553 / LMG 16656 / NCTC 13227 / J2315 / CF5610)</name>
    <name type="common">Burkholderia cepacia (strain J2315)</name>
    <dbReference type="NCBI Taxonomy" id="216591"/>
    <lineage>
        <taxon>Bacteria</taxon>
        <taxon>Pseudomonadati</taxon>
        <taxon>Pseudomonadota</taxon>
        <taxon>Betaproteobacteria</taxon>
        <taxon>Burkholderiales</taxon>
        <taxon>Burkholderiaceae</taxon>
        <taxon>Burkholderia</taxon>
        <taxon>Burkholderia cepacia complex</taxon>
    </lineage>
</organism>
<evidence type="ECO:0000255" key="1">
    <source>
        <dbReference type="HAMAP-Rule" id="MF_00508"/>
    </source>
</evidence>
<evidence type="ECO:0000305" key="2"/>